<proteinExistence type="evidence at protein level"/>
<evidence type="ECO:0000250" key="1"/>
<evidence type="ECO:0000305" key="2"/>
<sequence>MSNVPKEKRFIVWLDEVTKDDVVLVGGKNANLGEMIRAGIPVPPGFAVTAYAYKYFIEKTGLKDKIYPLLNSIDVNDKKVLDETTAKIRQWIMDTPMPPEVEEEIRKYYRELAKKIGMEPEKLRVAVRSSATAEDMPEASFAGQQDTYLNVYGEDNVVYYVKRCWASLFTSRAVFYRVAQGIPHEKSLMSVTVQKMVNSRTAGVMFTLHPVTGDEKVVVIEASWGLGESVVGGKVTPDEWVVDKQTLQIVDQKIHHKTLAIVFDPKKGKNVEIRWDENKQAWVSEEGPVDIEMVKHFHPDKPALKEEEVKRLAELALLIEKHYGRHMDIEWAVDYDIPFPDNVFIVQARLETVWSVRKEKEKAEKKAEIKGKNIVKLSEAKVLVRGLPASPGIGAGVAKVIFDPHSKEAQEFKEGEVLVTKMTDPDWVPLMKKAVAIVTDEGGMTSHAAIVSRELGIPAIVGTGNATQVIKSGIEVTVDGSRGVVYEGIVEDLVKPKEEVKAEVAGVGISPEQLLPLYPVTATKIYMNLGEPDAIEKYKDLPFDGIGLMRIEFIITDWVQYHPLYLIEQGKESLFIDKLAEGIAKVAQAIYPRPVVVRFSDFKTNEYRGLKGGEKYEPEERNPMIGWRGVSRYIHPKYEPAFRLEVRAIKKVREEMGLTNVWVMFPFVRTTWELERALKIMEEEGLKRGKDFKVWAMAEVPSIVLLADKFAEYVDGFSIGSNDLTQLILGADRDSNILAEMGYFDERDPAVLAGIKMIIEKAHSKGATVSICGQAPSVYPEIVEFLVEAGIDSISVNPDAVIATRRLVASIERKIMLKRLNKIMDKLNKLELGF</sequence>
<protein>
    <recommendedName>
        <fullName>Probable phosphoenolpyruvate synthase</fullName>
        <shortName>PEP synthase</shortName>
        <ecNumber>2.7.9.2</ecNumber>
    </recommendedName>
    <alternativeName>
        <fullName>Pyruvate, water dikinase</fullName>
    </alternativeName>
</protein>
<name>PPSA_STAMF</name>
<accession>P46893</accession>
<accession>A3DKU4</accession>
<keyword id="KW-0067">ATP-binding</keyword>
<keyword id="KW-0903">Direct protein sequencing</keyword>
<keyword id="KW-0418">Kinase</keyword>
<keyword id="KW-0460">Magnesium</keyword>
<keyword id="KW-0479">Metal-binding</keyword>
<keyword id="KW-0547">Nucleotide-binding</keyword>
<keyword id="KW-1185">Reference proteome</keyword>
<keyword id="KW-0808">Transferase</keyword>
<comment type="function">
    <text evidence="1">Catalyzes the phosphorylation of pyruvate to phosphoenolpyruvate.</text>
</comment>
<comment type="catalytic activity">
    <reaction>
        <text>pyruvate + ATP + H2O = phosphoenolpyruvate + AMP + phosphate + 2 H(+)</text>
        <dbReference type="Rhea" id="RHEA:11364"/>
        <dbReference type="ChEBI" id="CHEBI:15361"/>
        <dbReference type="ChEBI" id="CHEBI:15377"/>
        <dbReference type="ChEBI" id="CHEBI:15378"/>
        <dbReference type="ChEBI" id="CHEBI:30616"/>
        <dbReference type="ChEBI" id="CHEBI:43474"/>
        <dbReference type="ChEBI" id="CHEBI:58702"/>
        <dbReference type="ChEBI" id="CHEBI:456215"/>
        <dbReference type="EC" id="2.7.9.2"/>
    </reaction>
</comment>
<comment type="cofactor">
    <cofactor evidence="1">
        <name>Mg(2+)</name>
        <dbReference type="ChEBI" id="CHEBI:18420"/>
    </cofactor>
</comment>
<comment type="pathway">
    <text>Carbohydrate biosynthesis; gluconeogenesis.</text>
</comment>
<comment type="subunit">
    <text>Homooligomer. Forms a large complex of about 2000 kDa.</text>
</comment>
<comment type="domain">
    <text evidence="1">The N-terminal domain contains the ATP/Pi binding site, the central domain the pyrophosphate/phosphate carrier histidine, and the C-terminal domain the pyruvate binding site.</text>
</comment>
<comment type="PTM">
    <text>The N-terminus is blocked.</text>
</comment>
<comment type="miscellaneous">
    <text evidence="1">The reaction takes place in three steps, mediated by a phosphocarrier histidine residue located on the surface of the central domain. The two first partial reactions are catalyzed at an active site located on the N-terminal domain, and the third partial reaction is catalyzed at an active site located on the C-terminal domain. For catalytic turnover, the central domain swivels from the concave surface of the N-terminal domain to that of the C-terminal domain (By similarity).</text>
</comment>
<comment type="similarity">
    <text evidence="2">Belongs to the PEP-utilizing enzyme family.</text>
</comment>
<organism>
    <name type="scientific">Staphylothermus marinus (strain ATCC 43588 / DSM 3639 / JCM 9404 / F1)</name>
    <dbReference type="NCBI Taxonomy" id="399550"/>
    <lineage>
        <taxon>Archaea</taxon>
        <taxon>Thermoproteota</taxon>
        <taxon>Thermoprotei</taxon>
        <taxon>Desulfurococcales</taxon>
        <taxon>Desulfurococcaceae</taxon>
        <taxon>Staphylothermus</taxon>
    </lineage>
</organism>
<dbReference type="EC" id="2.7.9.2"/>
<dbReference type="EMBL" id="S74619">
    <property type="protein sequence ID" value="AAB32888.1"/>
    <property type="molecule type" value="Genomic_DNA"/>
</dbReference>
<dbReference type="EMBL" id="CP000575">
    <property type="protein sequence ID" value="ABN69254.1"/>
    <property type="molecule type" value="Genomic_DNA"/>
</dbReference>
<dbReference type="PIR" id="S51006">
    <property type="entry name" value="S51006"/>
</dbReference>
<dbReference type="RefSeq" id="WP_011838445.1">
    <property type="nucleotide sequence ID" value="NC_009033.1"/>
</dbReference>
<dbReference type="SMR" id="P46893"/>
<dbReference type="STRING" id="399550.Smar_0141"/>
<dbReference type="GeneID" id="4907183"/>
<dbReference type="KEGG" id="smr:Smar_0141"/>
<dbReference type="eggNOG" id="arCOG01111">
    <property type="taxonomic scope" value="Archaea"/>
</dbReference>
<dbReference type="HOGENOM" id="CLU_007308_6_2_2"/>
<dbReference type="OrthoDB" id="23397at2157"/>
<dbReference type="UniPathway" id="UPA00138"/>
<dbReference type="Proteomes" id="UP000000254">
    <property type="component" value="Chromosome"/>
</dbReference>
<dbReference type="GO" id="GO:0005524">
    <property type="term" value="F:ATP binding"/>
    <property type="evidence" value="ECO:0007669"/>
    <property type="project" value="UniProtKB-KW"/>
</dbReference>
<dbReference type="GO" id="GO:0046872">
    <property type="term" value="F:metal ion binding"/>
    <property type="evidence" value="ECO:0007669"/>
    <property type="project" value="UniProtKB-KW"/>
</dbReference>
<dbReference type="GO" id="GO:0008986">
    <property type="term" value="F:pyruvate, water dikinase activity"/>
    <property type="evidence" value="ECO:0007669"/>
    <property type="project" value="UniProtKB-EC"/>
</dbReference>
<dbReference type="GO" id="GO:0006094">
    <property type="term" value="P:gluconeogenesis"/>
    <property type="evidence" value="ECO:0007669"/>
    <property type="project" value="UniProtKB-UniPathway"/>
</dbReference>
<dbReference type="FunFam" id="3.30.1490.20:FF:000010">
    <property type="entry name" value="Phosphoenolpyruvate synthase"/>
    <property type="match status" value="1"/>
</dbReference>
<dbReference type="Gene3D" id="3.30.1490.20">
    <property type="entry name" value="ATP-grasp fold, A domain"/>
    <property type="match status" value="1"/>
</dbReference>
<dbReference type="Gene3D" id="3.30.470.20">
    <property type="entry name" value="ATP-grasp fold, B domain"/>
    <property type="match status" value="1"/>
</dbReference>
<dbReference type="Gene3D" id="3.20.20.60">
    <property type="entry name" value="Phosphoenolpyruvate-binding domains"/>
    <property type="match status" value="1"/>
</dbReference>
<dbReference type="Gene3D" id="3.50.30.10">
    <property type="entry name" value="Phosphohistidine domain"/>
    <property type="match status" value="1"/>
</dbReference>
<dbReference type="InterPro" id="IPR013815">
    <property type="entry name" value="ATP_grasp_subdomain_1"/>
</dbReference>
<dbReference type="InterPro" id="IPR008279">
    <property type="entry name" value="PEP-util_enz_mobile_dom"/>
</dbReference>
<dbReference type="InterPro" id="IPR006319">
    <property type="entry name" value="PEP_synth"/>
</dbReference>
<dbReference type="InterPro" id="IPR018274">
    <property type="entry name" value="PEP_util_AS"/>
</dbReference>
<dbReference type="InterPro" id="IPR000121">
    <property type="entry name" value="PEP_util_C"/>
</dbReference>
<dbReference type="InterPro" id="IPR023151">
    <property type="entry name" value="PEP_util_CS"/>
</dbReference>
<dbReference type="InterPro" id="IPR036637">
    <property type="entry name" value="Phosphohistidine_dom_sf"/>
</dbReference>
<dbReference type="InterPro" id="IPR002192">
    <property type="entry name" value="PPDK_AMP/ATP-bd"/>
</dbReference>
<dbReference type="InterPro" id="IPR015813">
    <property type="entry name" value="Pyrv/PenolPyrv_kinase-like_dom"/>
</dbReference>
<dbReference type="InterPro" id="IPR040442">
    <property type="entry name" value="Pyrv_kinase-like_dom_sf"/>
</dbReference>
<dbReference type="NCBIfam" id="TIGR01418">
    <property type="entry name" value="PEP_synth"/>
    <property type="match status" value="1"/>
</dbReference>
<dbReference type="NCBIfam" id="NF005057">
    <property type="entry name" value="PRK06464.1"/>
    <property type="match status" value="1"/>
</dbReference>
<dbReference type="PANTHER" id="PTHR43030">
    <property type="entry name" value="PHOSPHOENOLPYRUVATE SYNTHASE"/>
    <property type="match status" value="1"/>
</dbReference>
<dbReference type="PANTHER" id="PTHR43030:SF1">
    <property type="entry name" value="PHOSPHOENOLPYRUVATE SYNTHASE"/>
    <property type="match status" value="1"/>
</dbReference>
<dbReference type="Pfam" id="PF00391">
    <property type="entry name" value="PEP-utilizers"/>
    <property type="match status" value="1"/>
</dbReference>
<dbReference type="Pfam" id="PF02896">
    <property type="entry name" value="PEP-utilizers_C"/>
    <property type="match status" value="1"/>
</dbReference>
<dbReference type="Pfam" id="PF01326">
    <property type="entry name" value="PPDK_N"/>
    <property type="match status" value="1"/>
</dbReference>
<dbReference type="PIRSF" id="PIRSF000854">
    <property type="entry name" value="PEP_synthase"/>
    <property type="match status" value="1"/>
</dbReference>
<dbReference type="SUPFAM" id="SSF56059">
    <property type="entry name" value="Glutathione synthetase ATP-binding domain-like"/>
    <property type="match status" value="1"/>
</dbReference>
<dbReference type="SUPFAM" id="SSF51621">
    <property type="entry name" value="Phosphoenolpyruvate/pyruvate domain"/>
    <property type="match status" value="1"/>
</dbReference>
<dbReference type="SUPFAM" id="SSF52009">
    <property type="entry name" value="Phosphohistidine domain"/>
    <property type="match status" value="1"/>
</dbReference>
<dbReference type="PROSITE" id="PS00742">
    <property type="entry name" value="PEP_ENZYMES_2"/>
    <property type="match status" value="1"/>
</dbReference>
<dbReference type="PROSITE" id="PS00370">
    <property type="entry name" value="PEP_ENZYMES_PHOS_SITE"/>
    <property type="match status" value="1"/>
</dbReference>
<reference key="1">
    <citation type="journal article" date="1994" name="FEBS Lett.">
        <title>Primary structure of a multimeric protein, homologous to the PEP-utilizing enzyme family and isolated from a hyperthermophilic archaebacterium.</title>
        <authorList>
            <person name="Cicicopol C."/>
            <person name="Peters J."/>
            <person name="Kellermann J."/>
            <person name="Baumeister W."/>
        </authorList>
    </citation>
    <scope>NUCLEOTIDE SEQUENCE [GENOMIC DNA]</scope>
    <scope>PROTEIN SEQUENCE OF 296-320; 528-546; 625-636; 638-647; 657-661; 682-694; 698-720 AND 742-752</scope>
</reference>
<reference key="2">
    <citation type="journal article" date="2009" name="BMC Genomics">
        <title>The complete genome sequence of Staphylothermus marinus reveals differences in sulfur metabolism among heterotrophic Crenarchaeota.</title>
        <authorList>
            <person name="Anderson I.J."/>
            <person name="Dharmarajan L."/>
            <person name="Rodriguez J."/>
            <person name="Hooper S."/>
            <person name="Porat I."/>
            <person name="Ulrich L.E."/>
            <person name="Elkins J.G."/>
            <person name="Mavromatis K."/>
            <person name="Sun H."/>
            <person name="Land M."/>
            <person name="Lapidus A."/>
            <person name="Lucas S."/>
            <person name="Barry K."/>
            <person name="Huber H."/>
            <person name="Zhulin I.B."/>
            <person name="Whitman W.B."/>
            <person name="Mukhopadhyay B."/>
            <person name="Woese C."/>
            <person name="Bristow J."/>
            <person name="Kyrpides N."/>
        </authorList>
    </citation>
    <scope>NUCLEOTIDE SEQUENCE [LARGE SCALE GENOMIC DNA]</scope>
    <source>
        <strain>ATCC 43588 / DSM 3639 / JCM 9404 / F1</strain>
    </source>
</reference>
<reference key="3">
    <citation type="journal article" date="2009" name="Stand. Genomic Sci.">
        <title>Complete genome sequence of Staphylothermus marinus Stetter and Fiala 1986 type strain F1.</title>
        <authorList>
            <person name="Anderson I.J."/>
            <person name="Sun H."/>
            <person name="Lapidus A."/>
            <person name="Copeland A."/>
            <person name="Glavina Del Rio T."/>
            <person name="Tice H."/>
            <person name="Dalin E."/>
            <person name="Lucas S."/>
            <person name="Barry K."/>
            <person name="Land M."/>
            <person name="Richardson P."/>
            <person name="Huber H."/>
            <person name="Kyrpides N.C."/>
        </authorList>
    </citation>
    <scope>NUCLEOTIDE SEQUENCE [LARGE SCALE GENOMIC DNA]</scope>
    <source>
        <strain>ATCC 43588 / DSM 3639 / JCM 9404 / F1</strain>
    </source>
</reference>
<feature type="chain" id="PRO_0000147038" description="Probable phosphoenolpyruvate synthase">
    <location>
        <begin position="1"/>
        <end position="834"/>
    </location>
</feature>
<feature type="active site" description="Tele-phosphohistidine intermediate" evidence="1">
    <location>
        <position position="447"/>
    </location>
</feature>
<feature type="active site" description="Proton donor" evidence="1">
    <location>
        <position position="772"/>
    </location>
</feature>
<feature type="binding site" evidence="1">
    <location>
        <position position="550"/>
    </location>
    <ligand>
        <name>substrate</name>
    </ligand>
</feature>
<feature type="binding site" evidence="1">
    <location>
        <position position="598"/>
    </location>
    <ligand>
        <name>substrate</name>
    </ligand>
</feature>
<feature type="binding site" evidence="1">
    <location>
        <position position="699"/>
    </location>
    <ligand>
        <name>Mg(2+)</name>
        <dbReference type="ChEBI" id="CHEBI:18420"/>
    </ligand>
</feature>
<feature type="binding site" evidence="1">
    <location>
        <position position="699"/>
    </location>
    <ligand>
        <name>substrate</name>
    </ligand>
</feature>
<feature type="binding site" evidence="1">
    <location>
        <position position="720"/>
    </location>
    <ligand>
        <name>substrate</name>
    </ligand>
</feature>
<feature type="binding site" evidence="1">
    <location>
        <position position="721"/>
    </location>
    <ligand>
        <name>substrate</name>
    </ligand>
</feature>
<feature type="binding site" evidence="1">
    <location>
        <position position="722"/>
    </location>
    <ligand>
        <name>substrate</name>
    </ligand>
</feature>
<feature type="binding site" evidence="1">
    <location>
        <position position="723"/>
    </location>
    <ligand>
        <name>Mg(2+)</name>
        <dbReference type="ChEBI" id="CHEBI:18420"/>
    </ligand>
</feature>
<feature type="binding site" evidence="1">
    <location>
        <position position="723"/>
    </location>
    <ligand>
        <name>substrate</name>
    </ligand>
</feature>
<gene>
    <name type="primary">ppsA</name>
    <name type="ordered locus">Smar_0141</name>
</gene>